<protein>
    <recommendedName>
        <fullName evidence="1">Ribosomal protein uS12 methylthiotransferase RimO</fullName>
        <shortName evidence="1">uS12 MTTase</shortName>
        <shortName evidence="1">uS12 methylthiotransferase</shortName>
        <ecNumber evidence="1">2.8.4.4</ecNumber>
    </recommendedName>
    <alternativeName>
        <fullName evidence="1">Ribosomal protein uS12 (aspartate-C(3))-methylthiotransferase</fullName>
    </alternativeName>
    <alternativeName>
        <fullName evidence="1">Ribosome maturation factor RimO</fullName>
    </alternativeName>
</protein>
<reference key="1">
    <citation type="journal article" date="2004" name="Proc. Natl. Acad. Sci. U.S.A.">
        <title>Genome sequence of the enterobacterial phytopathogen Erwinia carotovora subsp. atroseptica and characterization of virulence factors.</title>
        <authorList>
            <person name="Bell K.S."/>
            <person name="Sebaihia M."/>
            <person name="Pritchard L."/>
            <person name="Holden M.T.G."/>
            <person name="Hyman L.J."/>
            <person name="Holeva M.C."/>
            <person name="Thomson N.R."/>
            <person name="Bentley S.D."/>
            <person name="Churcher L.J.C."/>
            <person name="Mungall K."/>
            <person name="Atkin R."/>
            <person name="Bason N."/>
            <person name="Brooks K."/>
            <person name="Chillingworth T."/>
            <person name="Clark K."/>
            <person name="Doggett J."/>
            <person name="Fraser A."/>
            <person name="Hance Z."/>
            <person name="Hauser H."/>
            <person name="Jagels K."/>
            <person name="Moule S."/>
            <person name="Norbertczak H."/>
            <person name="Ormond D."/>
            <person name="Price C."/>
            <person name="Quail M.A."/>
            <person name="Sanders M."/>
            <person name="Walker D."/>
            <person name="Whitehead S."/>
            <person name="Salmond G.P.C."/>
            <person name="Birch P.R.J."/>
            <person name="Parkhill J."/>
            <person name="Toth I.K."/>
        </authorList>
    </citation>
    <scope>NUCLEOTIDE SEQUENCE [LARGE SCALE GENOMIC DNA]</scope>
    <source>
        <strain>SCRI 1043 / ATCC BAA-672</strain>
    </source>
</reference>
<sequence length="442" mass="49467">MSNISTPQPRIGFVSLGCPKNLVDSERILTELRTEGYQVVPRYDDAELVIVNTCGFIDSAVQESLEAIGEALNENGKVIVTGCLGAKENQIREVHPKVLEITGPHSYEQVLSHVHQYVPKPTHNPFTSLVPEQGVKLTPRHYAYLKISEGCNHRCTFCIIPSMRGDLDSRPIGSVLDEAKRLVNAGVKELLVISQDTSAYGADVKQRTGFWNGQPVKTSMVSLCEQLASLGVWVRLHYVYPYPHVDDVIPLMAEGKILPYLDIPLQHASPKILKLMKRPGAVERTLERIKRWREICPDLTLRSTFIVGFPGETEEDFQMLLDFLKEAKLDRVGCFKFSPVEGAAANELPDQVPEEVKEERFHRFMQLQQAISTQRLQDKIGREVLVLIDEIDEEGAIGRSMADAPEIDGAVYLNGETGVKVGDIVKVKVEHADEYDLWGSRV</sequence>
<evidence type="ECO:0000255" key="1">
    <source>
        <dbReference type="HAMAP-Rule" id="MF_01865"/>
    </source>
</evidence>
<evidence type="ECO:0000255" key="2">
    <source>
        <dbReference type="PROSITE-ProRule" id="PRU01266"/>
    </source>
</evidence>
<accession>Q6D3N6</accession>
<name>RIMO_PECAS</name>
<keyword id="KW-0004">4Fe-4S</keyword>
<keyword id="KW-0963">Cytoplasm</keyword>
<keyword id="KW-0408">Iron</keyword>
<keyword id="KW-0411">Iron-sulfur</keyword>
<keyword id="KW-0479">Metal-binding</keyword>
<keyword id="KW-1185">Reference proteome</keyword>
<keyword id="KW-0949">S-adenosyl-L-methionine</keyword>
<keyword id="KW-0808">Transferase</keyword>
<gene>
    <name evidence="1" type="primary">rimO</name>
    <name type="ordered locus">ECA2708</name>
</gene>
<organism>
    <name type="scientific">Pectobacterium atrosepticum (strain SCRI 1043 / ATCC BAA-672)</name>
    <name type="common">Erwinia carotovora subsp. atroseptica</name>
    <dbReference type="NCBI Taxonomy" id="218491"/>
    <lineage>
        <taxon>Bacteria</taxon>
        <taxon>Pseudomonadati</taxon>
        <taxon>Pseudomonadota</taxon>
        <taxon>Gammaproteobacteria</taxon>
        <taxon>Enterobacterales</taxon>
        <taxon>Pectobacteriaceae</taxon>
        <taxon>Pectobacterium</taxon>
    </lineage>
</organism>
<feature type="chain" id="PRO_0000374814" description="Ribosomal protein uS12 methylthiotransferase RimO">
    <location>
        <begin position="1"/>
        <end position="442"/>
    </location>
</feature>
<feature type="domain" description="MTTase N-terminal" evidence="1">
    <location>
        <begin position="9"/>
        <end position="119"/>
    </location>
</feature>
<feature type="domain" description="Radical SAM core" evidence="2">
    <location>
        <begin position="137"/>
        <end position="375"/>
    </location>
</feature>
<feature type="domain" description="TRAM" evidence="1">
    <location>
        <begin position="377"/>
        <end position="442"/>
    </location>
</feature>
<feature type="binding site" evidence="1">
    <location>
        <position position="18"/>
    </location>
    <ligand>
        <name>[4Fe-4S] cluster</name>
        <dbReference type="ChEBI" id="CHEBI:49883"/>
        <label>1</label>
    </ligand>
</feature>
<feature type="binding site" evidence="1">
    <location>
        <position position="54"/>
    </location>
    <ligand>
        <name>[4Fe-4S] cluster</name>
        <dbReference type="ChEBI" id="CHEBI:49883"/>
        <label>1</label>
    </ligand>
</feature>
<feature type="binding site" evidence="1">
    <location>
        <position position="83"/>
    </location>
    <ligand>
        <name>[4Fe-4S] cluster</name>
        <dbReference type="ChEBI" id="CHEBI:49883"/>
        <label>1</label>
    </ligand>
</feature>
<feature type="binding site" evidence="1">
    <location>
        <position position="151"/>
    </location>
    <ligand>
        <name>[4Fe-4S] cluster</name>
        <dbReference type="ChEBI" id="CHEBI:49883"/>
        <label>2</label>
        <note>4Fe-4S-S-AdoMet</note>
    </ligand>
</feature>
<feature type="binding site" evidence="1">
    <location>
        <position position="155"/>
    </location>
    <ligand>
        <name>[4Fe-4S] cluster</name>
        <dbReference type="ChEBI" id="CHEBI:49883"/>
        <label>2</label>
        <note>4Fe-4S-S-AdoMet</note>
    </ligand>
</feature>
<feature type="binding site" evidence="1">
    <location>
        <position position="158"/>
    </location>
    <ligand>
        <name>[4Fe-4S] cluster</name>
        <dbReference type="ChEBI" id="CHEBI:49883"/>
        <label>2</label>
        <note>4Fe-4S-S-AdoMet</note>
    </ligand>
</feature>
<dbReference type="EC" id="2.8.4.4" evidence="1"/>
<dbReference type="EMBL" id="BX950851">
    <property type="protein sequence ID" value="CAG75608.1"/>
    <property type="molecule type" value="Genomic_DNA"/>
</dbReference>
<dbReference type="RefSeq" id="WP_011094249.1">
    <property type="nucleotide sequence ID" value="NC_004547.2"/>
</dbReference>
<dbReference type="SMR" id="Q6D3N6"/>
<dbReference type="STRING" id="218491.ECA2708"/>
<dbReference type="GeneID" id="57208601"/>
<dbReference type="KEGG" id="eca:ECA2708"/>
<dbReference type="PATRIC" id="fig|218491.5.peg.2741"/>
<dbReference type="eggNOG" id="COG0621">
    <property type="taxonomic scope" value="Bacteria"/>
</dbReference>
<dbReference type="HOGENOM" id="CLU_018697_0_0_6"/>
<dbReference type="OrthoDB" id="9805215at2"/>
<dbReference type="Proteomes" id="UP000007966">
    <property type="component" value="Chromosome"/>
</dbReference>
<dbReference type="GO" id="GO:0005829">
    <property type="term" value="C:cytosol"/>
    <property type="evidence" value="ECO:0007669"/>
    <property type="project" value="TreeGrafter"/>
</dbReference>
<dbReference type="GO" id="GO:0051539">
    <property type="term" value="F:4 iron, 4 sulfur cluster binding"/>
    <property type="evidence" value="ECO:0007669"/>
    <property type="project" value="UniProtKB-UniRule"/>
</dbReference>
<dbReference type="GO" id="GO:0035599">
    <property type="term" value="F:aspartic acid methylthiotransferase activity"/>
    <property type="evidence" value="ECO:0007669"/>
    <property type="project" value="TreeGrafter"/>
</dbReference>
<dbReference type="GO" id="GO:0046872">
    <property type="term" value="F:metal ion binding"/>
    <property type="evidence" value="ECO:0007669"/>
    <property type="project" value="UniProtKB-KW"/>
</dbReference>
<dbReference type="GO" id="GO:0103039">
    <property type="term" value="F:protein methylthiotransferase activity"/>
    <property type="evidence" value="ECO:0007669"/>
    <property type="project" value="UniProtKB-EC"/>
</dbReference>
<dbReference type="GO" id="GO:0006400">
    <property type="term" value="P:tRNA modification"/>
    <property type="evidence" value="ECO:0007669"/>
    <property type="project" value="InterPro"/>
</dbReference>
<dbReference type="CDD" id="cd01335">
    <property type="entry name" value="Radical_SAM"/>
    <property type="match status" value="1"/>
</dbReference>
<dbReference type="FunFam" id="2.40.50.140:FF:000060">
    <property type="entry name" value="Ribosomal protein S12 methylthiotransferase RimO"/>
    <property type="match status" value="1"/>
</dbReference>
<dbReference type="FunFam" id="3.40.50.12160:FF:000002">
    <property type="entry name" value="Ribosomal protein S12 methylthiotransferase RimO"/>
    <property type="match status" value="1"/>
</dbReference>
<dbReference type="FunFam" id="3.80.30.20:FF:000001">
    <property type="entry name" value="tRNA-2-methylthio-N(6)-dimethylallyladenosine synthase 2"/>
    <property type="match status" value="1"/>
</dbReference>
<dbReference type="Gene3D" id="3.40.50.12160">
    <property type="entry name" value="Methylthiotransferase, N-terminal domain"/>
    <property type="match status" value="1"/>
</dbReference>
<dbReference type="Gene3D" id="2.40.50.140">
    <property type="entry name" value="Nucleic acid-binding proteins"/>
    <property type="match status" value="1"/>
</dbReference>
<dbReference type="Gene3D" id="3.80.30.20">
    <property type="entry name" value="tm_1862 like domain"/>
    <property type="match status" value="1"/>
</dbReference>
<dbReference type="HAMAP" id="MF_01865">
    <property type="entry name" value="MTTase_RimO"/>
    <property type="match status" value="1"/>
</dbReference>
<dbReference type="InterPro" id="IPR006638">
    <property type="entry name" value="Elp3/MiaA/NifB-like_rSAM"/>
</dbReference>
<dbReference type="InterPro" id="IPR005839">
    <property type="entry name" value="Methylthiotransferase"/>
</dbReference>
<dbReference type="InterPro" id="IPR020612">
    <property type="entry name" value="Methylthiotransferase_CS"/>
</dbReference>
<dbReference type="InterPro" id="IPR013848">
    <property type="entry name" value="Methylthiotransferase_N"/>
</dbReference>
<dbReference type="InterPro" id="IPR038135">
    <property type="entry name" value="Methylthiotransferase_N_sf"/>
</dbReference>
<dbReference type="InterPro" id="IPR012340">
    <property type="entry name" value="NA-bd_OB-fold"/>
</dbReference>
<dbReference type="InterPro" id="IPR005840">
    <property type="entry name" value="Ribosomal_uS12_MeSTrfase_RimO"/>
</dbReference>
<dbReference type="InterPro" id="IPR007197">
    <property type="entry name" value="rSAM"/>
</dbReference>
<dbReference type="InterPro" id="IPR023404">
    <property type="entry name" value="rSAM_horseshoe"/>
</dbReference>
<dbReference type="InterPro" id="IPR002792">
    <property type="entry name" value="TRAM_dom"/>
</dbReference>
<dbReference type="NCBIfam" id="TIGR01125">
    <property type="entry name" value="30S ribosomal protein S12 methylthiotransferase RimO"/>
    <property type="match status" value="1"/>
</dbReference>
<dbReference type="NCBIfam" id="TIGR00089">
    <property type="entry name" value="MiaB/RimO family radical SAM methylthiotransferase"/>
    <property type="match status" value="1"/>
</dbReference>
<dbReference type="PANTHER" id="PTHR43837">
    <property type="entry name" value="RIBOSOMAL PROTEIN S12 METHYLTHIOTRANSFERASE RIMO"/>
    <property type="match status" value="1"/>
</dbReference>
<dbReference type="PANTHER" id="PTHR43837:SF1">
    <property type="entry name" value="RIBOSOMAL PROTEIN US12 METHYLTHIOTRANSFERASE RIMO"/>
    <property type="match status" value="1"/>
</dbReference>
<dbReference type="Pfam" id="PF04055">
    <property type="entry name" value="Radical_SAM"/>
    <property type="match status" value="1"/>
</dbReference>
<dbReference type="Pfam" id="PF18693">
    <property type="entry name" value="TRAM_2"/>
    <property type="match status" value="1"/>
</dbReference>
<dbReference type="Pfam" id="PF00919">
    <property type="entry name" value="UPF0004"/>
    <property type="match status" value="1"/>
</dbReference>
<dbReference type="SFLD" id="SFLDG01082">
    <property type="entry name" value="B12-binding_domain_containing"/>
    <property type="match status" value="1"/>
</dbReference>
<dbReference type="SFLD" id="SFLDG01061">
    <property type="entry name" value="methylthiotransferase"/>
    <property type="match status" value="1"/>
</dbReference>
<dbReference type="SFLD" id="SFLDF00274">
    <property type="entry name" value="ribosomal_protein_S12_methylth"/>
    <property type="match status" value="1"/>
</dbReference>
<dbReference type="SMART" id="SM00729">
    <property type="entry name" value="Elp3"/>
    <property type="match status" value="1"/>
</dbReference>
<dbReference type="SUPFAM" id="SSF102114">
    <property type="entry name" value="Radical SAM enzymes"/>
    <property type="match status" value="1"/>
</dbReference>
<dbReference type="PROSITE" id="PS51449">
    <property type="entry name" value="MTTASE_N"/>
    <property type="match status" value="1"/>
</dbReference>
<dbReference type="PROSITE" id="PS01278">
    <property type="entry name" value="MTTASE_RADICAL"/>
    <property type="match status" value="1"/>
</dbReference>
<dbReference type="PROSITE" id="PS51918">
    <property type="entry name" value="RADICAL_SAM"/>
    <property type="match status" value="1"/>
</dbReference>
<dbReference type="PROSITE" id="PS50926">
    <property type="entry name" value="TRAM"/>
    <property type="match status" value="1"/>
</dbReference>
<comment type="function">
    <text evidence="1">Catalyzes the methylthiolation of an aspartic acid residue of ribosomal protein uS12.</text>
</comment>
<comment type="catalytic activity">
    <reaction evidence="1">
        <text>L-aspartate(89)-[ribosomal protein uS12]-hydrogen + (sulfur carrier)-SH + AH2 + 2 S-adenosyl-L-methionine = 3-methylsulfanyl-L-aspartate(89)-[ribosomal protein uS12]-hydrogen + (sulfur carrier)-H + 5'-deoxyadenosine + L-methionine + A + S-adenosyl-L-homocysteine + 2 H(+)</text>
        <dbReference type="Rhea" id="RHEA:37087"/>
        <dbReference type="Rhea" id="RHEA-COMP:10460"/>
        <dbReference type="Rhea" id="RHEA-COMP:10461"/>
        <dbReference type="Rhea" id="RHEA-COMP:14737"/>
        <dbReference type="Rhea" id="RHEA-COMP:14739"/>
        <dbReference type="ChEBI" id="CHEBI:13193"/>
        <dbReference type="ChEBI" id="CHEBI:15378"/>
        <dbReference type="ChEBI" id="CHEBI:17319"/>
        <dbReference type="ChEBI" id="CHEBI:17499"/>
        <dbReference type="ChEBI" id="CHEBI:29917"/>
        <dbReference type="ChEBI" id="CHEBI:29961"/>
        <dbReference type="ChEBI" id="CHEBI:57844"/>
        <dbReference type="ChEBI" id="CHEBI:57856"/>
        <dbReference type="ChEBI" id="CHEBI:59789"/>
        <dbReference type="ChEBI" id="CHEBI:64428"/>
        <dbReference type="ChEBI" id="CHEBI:73599"/>
        <dbReference type="EC" id="2.8.4.4"/>
    </reaction>
</comment>
<comment type="cofactor">
    <cofactor evidence="1">
        <name>[4Fe-4S] cluster</name>
        <dbReference type="ChEBI" id="CHEBI:49883"/>
    </cofactor>
    <text evidence="1">Binds 2 [4Fe-4S] clusters. One cluster is coordinated with 3 cysteines and an exchangeable S-adenosyl-L-methionine.</text>
</comment>
<comment type="subcellular location">
    <subcellularLocation>
        <location evidence="1">Cytoplasm</location>
    </subcellularLocation>
</comment>
<comment type="similarity">
    <text evidence="1">Belongs to the methylthiotransferase family. RimO subfamily.</text>
</comment>
<proteinExistence type="inferred from homology"/>